<dbReference type="GO" id="GO:0005576">
    <property type="term" value="C:extracellular region"/>
    <property type="evidence" value="ECO:0000314"/>
    <property type="project" value="UniProtKB"/>
</dbReference>
<dbReference type="GO" id="GO:0050829">
    <property type="term" value="P:defense response to Gram-negative bacterium"/>
    <property type="evidence" value="ECO:0000314"/>
    <property type="project" value="UniProtKB"/>
</dbReference>
<dbReference type="GO" id="GO:0050830">
    <property type="term" value="P:defense response to Gram-positive bacterium"/>
    <property type="evidence" value="ECO:0000314"/>
    <property type="project" value="UniProtKB"/>
</dbReference>
<dbReference type="GO" id="GO:0044179">
    <property type="term" value="P:hemolysis in another organism"/>
    <property type="evidence" value="ECO:0000314"/>
    <property type="project" value="UniProtKB"/>
</dbReference>
<dbReference type="InterPro" id="IPR004275">
    <property type="entry name" value="Frog_antimicrobial_propeptide"/>
</dbReference>
<dbReference type="InterPro" id="IPR032749">
    <property type="entry name" value="Nigrocin"/>
</dbReference>
<dbReference type="Pfam" id="PF16047">
    <property type="entry name" value="Antimicrobial22"/>
    <property type="match status" value="1"/>
</dbReference>
<dbReference type="Pfam" id="PF03032">
    <property type="entry name" value="FSAP_sig_propep"/>
    <property type="match status" value="1"/>
</dbReference>
<accession>P85070</accession>
<accession>P0C2A4</accession>
<sequence length="67" mass="7454">MFTMKKSMLLLFFLGTISLSLCEQERNADEEERRDEEVAKMEEIKRGLLSGILGAGKNIVCGLSGLC</sequence>
<reference evidence="7" key="1">
    <citation type="journal article" date="2006" name="Toxicon">
        <title>Two antimicrobial peptides from skin secretions of Rana grahami.</title>
        <authorList>
            <person name="Xu X."/>
            <person name="Li J."/>
            <person name="Han Y."/>
            <person name="Yang H."/>
            <person name="Liang J."/>
            <person name="Lu Q."/>
            <person name="Lai R."/>
        </authorList>
    </citation>
    <scope>NUCLEOTIDE SEQUENCE [MRNA]</scope>
    <scope>PROTEIN SEQUENCE OF 47-67</scope>
    <scope>FUNCTION</scope>
    <scope>SUBCELLULAR LOCATION</scope>
    <scope>MASS SPECTROMETRY</scope>
    <source>
        <tissue evidence="3">Skin secretion</tissue>
    </source>
</reference>
<reference key="2">
    <citation type="journal article" date="2006" name="Peptides">
        <title>Antimicrobial peptides from diverse families isolated from the skin of the Asian frog, Rana grahami.</title>
        <authorList>
            <person name="Conlon J.M."/>
            <person name="Al-Ghaferi N."/>
            <person name="Abraham B."/>
            <person name="Jiansheng H."/>
            <person name="Cosette P."/>
            <person name="Leprince J."/>
            <person name="Jouenne T."/>
            <person name="Vaudry H."/>
        </authorList>
    </citation>
    <scope>PROTEIN SEQUENCE OF 47-67</scope>
    <scope>FUNCTION</scope>
    <scope>MASS SPECTROMETRY</scope>
    <source>
        <tissue evidence="6">Skin</tissue>
    </source>
</reference>
<organism evidence="5">
    <name type="scientific">Odorrana grahami</name>
    <name type="common">Yunnanfu frog</name>
    <name type="synonym">Rana grahami</name>
    <dbReference type="NCBI Taxonomy" id="167935"/>
    <lineage>
        <taxon>Eukaryota</taxon>
        <taxon>Metazoa</taxon>
        <taxon>Chordata</taxon>
        <taxon>Craniata</taxon>
        <taxon>Vertebrata</taxon>
        <taxon>Euteleostomi</taxon>
        <taxon>Amphibia</taxon>
        <taxon>Batrachia</taxon>
        <taxon>Anura</taxon>
        <taxon>Neobatrachia</taxon>
        <taxon>Ranoidea</taxon>
        <taxon>Ranidae</taxon>
        <taxon>Odorrana</taxon>
    </lineage>
</organism>
<feature type="signal peptide" evidence="2">
    <location>
        <begin position="1"/>
        <end position="22"/>
    </location>
</feature>
<feature type="propeptide" id="PRO_0000273291" evidence="7">
    <location>
        <begin position="23"/>
        <end position="46"/>
    </location>
</feature>
<feature type="peptide" id="PRO_0000273292" description="Nigrocin-2GRc" evidence="3 4">
    <location>
        <begin position="47"/>
        <end position="67"/>
    </location>
</feature>
<feature type="disulfide bond" evidence="1">
    <location>
        <begin position="61"/>
        <end position="67"/>
    </location>
</feature>
<protein>
    <recommendedName>
        <fullName evidence="6">Nigrocin-2GRc</fullName>
    </recommendedName>
    <alternativeName>
        <fullName evidence="5">Grahamin-2</fullName>
    </alternativeName>
</protein>
<comment type="function">
    <text evidence="3 4">Antimicrobial peptide active at least against the Gram-positive bacterium S.aureus but with otherwise unclear activity spectrum (PubMed:16487561, PubMed:16621155). Lacks hemolytic activity against rabbit or human erythrocytes (PubMed:16487561, PubMed:16621155).</text>
</comment>
<comment type="subcellular location">
    <subcellularLocation>
        <location evidence="3">Secreted</location>
    </subcellularLocation>
</comment>
<comment type="tissue specificity">
    <text evidence="8">Expressed by the skin glands.</text>
</comment>
<comment type="mass spectrometry" mass="1942.0" method="FAB" evidence="3"/>
<comment type="mass spectrometry" mass="1942.1" method="MALDI" evidence="4"/>
<comment type="similarity">
    <text evidence="7">Belongs to the frog skin active peptide (FSAP) family. Brevinin subfamily.</text>
</comment>
<keyword id="KW-0878">Amphibian defense peptide</keyword>
<keyword id="KW-0044">Antibiotic</keyword>
<keyword id="KW-0929">Antimicrobial</keyword>
<keyword id="KW-0165">Cleavage on pair of basic residues</keyword>
<keyword id="KW-0903">Direct protein sequencing</keyword>
<keyword id="KW-1015">Disulfide bond</keyword>
<keyword id="KW-0964">Secreted</keyword>
<keyword id="KW-0732">Signal</keyword>
<evidence type="ECO:0000250" key="1">
    <source>
        <dbReference type="UniProtKB" id="P39084"/>
    </source>
</evidence>
<evidence type="ECO:0000255" key="2"/>
<evidence type="ECO:0000269" key="3">
    <source>
    </source>
</evidence>
<evidence type="ECO:0000269" key="4">
    <source>
    </source>
</evidence>
<evidence type="ECO:0000303" key="5">
    <source>
    </source>
</evidence>
<evidence type="ECO:0000303" key="6">
    <source>
    </source>
</evidence>
<evidence type="ECO:0000305" key="7"/>
<evidence type="ECO:0000305" key="8">
    <source>
    </source>
</evidence>
<name>NIG2C_ODOGR</name>
<proteinExistence type="evidence at protein level"/>